<reference key="1">
    <citation type="journal article" date="1994" name="Infect. Immun.">
        <title>The virulence gene cluster of Listeria monocytogenes is also present in Listeria ivanovii, an animal pathogen, and Listeria seeligeri, a nonpathogenic species.</title>
        <authorList>
            <person name="Gouin E."/>
            <person name="Mengaud J."/>
            <person name="Cossart P."/>
        </authorList>
    </citation>
    <scope>NUCLEOTIDE SEQUENCE [GENOMIC DNA]</scope>
    <source>
        <strain>LO28 / Serovar 1/2c</strain>
    </source>
</reference>
<reference key="2">
    <citation type="journal article" date="2001" name="Science">
        <title>Comparative genomics of Listeria species.</title>
        <authorList>
            <person name="Glaser P."/>
            <person name="Frangeul L."/>
            <person name="Buchrieser C."/>
            <person name="Rusniok C."/>
            <person name="Amend A."/>
            <person name="Baquero F."/>
            <person name="Berche P."/>
            <person name="Bloecker H."/>
            <person name="Brandt P."/>
            <person name="Chakraborty T."/>
            <person name="Charbit A."/>
            <person name="Chetouani F."/>
            <person name="Couve E."/>
            <person name="de Daruvar A."/>
            <person name="Dehoux P."/>
            <person name="Domann E."/>
            <person name="Dominguez-Bernal G."/>
            <person name="Duchaud E."/>
            <person name="Durant L."/>
            <person name="Dussurget O."/>
            <person name="Entian K.-D."/>
            <person name="Fsihi H."/>
            <person name="Garcia-del Portillo F."/>
            <person name="Garrido P."/>
            <person name="Gautier L."/>
            <person name="Goebel W."/>
            <person name="Gomez-Lopez N."/>
            <person name="Hain T."/>
            <person name="Hauf J."/>
            <person name="Jackson D."/>
            <person name="Jones L.-M."/>
            <person name="Kaerst U."/>
            <person name="Kreft J."/>
            <person name="Kuhn M."/>
            <person name="Kunst F."/>
            <person name="Kurapkat G."/>
            <person name="Madueno E."/>
            <person name="Maitournam A."/>
            <person name="Mata Vicente J."/>
            <person name="Ng E."/>
            <person name="Nedjari H."/>
            <person name="Nordsiek G."/>
            <person name="Novella S."/>
            <person name="de Pablos B."/>
            <person name="Perez-Diaz J.-C."/>
            <person name="Purcell R."/>
            <person name="Remmel B."/>
            <person name="Rose M."/>
            <person name="Schlueter T."/>
            <person name="Simoes N."/>
            <person name="Tierrez A."/>
            <person name="Vazquez-Boland J.-A."/>
            <person name="Voss H."/>
            <person name="Wehland J."/>
            <person name="Cossart P."/>
        </authorList>
    </citation>
    <scope>NUCLEOTIDE SEQUENCE [LARGE SCALE GENOMIC DNA]</scope>
    <source>
        <strain>ATCC BAA-679 / EGD-e</strain>
    </source>
</reference>
<comment type="function">
    <text evidence="1">Involved in the biosynthesis of the central metabolite phospho-alpha-D-ribosyl-1-pyrophosphate (PRPP) via the transfer of pyrophosphoryl group from ATP to 1-hydroxyl of ribose-5-phosphate (Rib-5-P).</text>
</comment>
<comment type="catalytic activity">
    <reaction evidence="1">
        <text>D-ribose 5-phosphate + ATP = 5-phospho-alpha-D-ribose 1-diphosphate + AMP + H(+)</text>
        <dbReference type="Rhea" id="RHEA:15609"/>
        <dbReference type="ChEBI" id="CHEBI:15378"/>
        <dbReference type="ChEBI" id="CHEBI:30616"/>
        <dbReference type="ChEBI" id="CHEBI:58017"/>
        <dbReference type="ChEBI" id="CHEBI:78346"/>
        <dbReference type="ChEBI" id="CHEBI:456215"/>
        <dbReference type="EC" id="2.7.6.1"/>
    </reaction>
</comment>
<comment type="cofactor">
    <cofactor evidence="1">
        <name>Mg(2+)</name>
        <dbReference type="ChEBI" id="CHEBI:18420"/>
    </cofactor>
    <text evidence="1">Binds 2 Mg(2+) ions per subunit.</text>
</comment>
<comment type="pathway">
    <text evidence="1">Metabolic intermediate biosynthesis; 5-phospho-alpha-D-ribose 1-diphosphate biosynthesis; 5-phospho-alpha-D-ribose 1-diphosphate from D-ribose 5-phosphate (route I): step 1/1.</text>
</comment>
<comment type="subunit">
    <text evidence="1">Homohexamer.</text>
</comment>
<comment type="subcellular location">
    <subcellularLocation>
        <location evidence="1">Cytoplasm</location>
    </subcellularLocation>
</comment>
<comment type="similarity">
    <text evidence="1">Belongs to the ribose-phosphate pyrophosphokinase family. Class I subfamily.</text>
</comment>
<proteinExistence type="inferred from homology"/>
<protein>
    <recommendedName>
        <fullName evidence="1">Ribose-phosphate pyrophosphokinase 1</fullName>
        <shortName evidence="1">RPPK 1</shortName>
        <ecNumber evidence="1">2.7.6.1</ecNumber>
    </recommendedName>
    <alternativeName>
        <fullName evidence="1">5-phospho-D-ribosyl alpha-1-diphosphate synthase 1</fullName>
    </alternativeName>
    <alternativeName>
        <fullName evidence="1">Phosphoribosyl diphosphate synthase 1</fullName>
    </alternativeName>
    <alternativeName>
        <fullName evidence="1">Phosphoribosyl pyrophosphate synthase 1</fullName>
        <shortName evidence="1">P-Rib-PP synthase 1</shortName>
        <shortName evidence="1">PRPP synthase 1</shortName>
        <shortName evidence="1">PRPPase 1</shortName>
    </alternativeName>
</protein>
<name>KPRS1_LISMO</name>
<gene>
    <name evidence="1" type="primary">prs1</name>
    <name type="ordered locus">lmo0199</name>
</gene>
<sequence length="318" mass="35069">MSNEYFDPKLKIFSLNSNRELAEEIAKEVGIELGKSSVTHFSDGEIQINIEESIRGCHVYVIQSTSNPVNQNLMELLIMIDALKRASAATINIVMPYYGYARQDRKARSREPITAKLVANLIETAGATRMITLDMHAPQIQGFFDIPIDHLNAVRLLSDYFSERHLGDDLVVVSPDHGGVTRARKMADRLKAPIAIIDKRRPRPNVAEVMNIVGNVEGKVCIIIDDIIDTAGTITLAAKALREAGATKVYACCSHPVLSGPAMKRIEESPIEKLVVTNSIALPEEKWIDKMEQLSVAALLGEAIVRVHENASVSSLFE</sequence>
<evidence type="ECO:0000255" key="1">
    <source>
        <dbReference type="HAMAP-Rule" id="MF_00583"/>
    </source>
</evidence>
<keyword id="KW-0067">ATP-binding</keyword>
<keyword id="KW-0963">Cytoplasm</keyword>
<keyword id="KW-0418">Kinase</keyword>
<keyword id="KW-0460">Magnesium</keyword>
<keyword id="KW-0479">Metal-binding</keyword>
<keyword id="KW-0545">Nucleotide biosynthesis</keyword>
<keyword id="KW-0547">Nucleotide-binding</keyword>
<keyword id="KW-1185">Reference proteome</keyword>
<keyword id="KW-0808">Transferase</keyword>
<organism>
    <name type="scientific">Listeria monocytogenes serovar 1/2a (strain ATCC BAA-679 / EGD-e)</name>
    <dbReference type="NCBI Taxonomy" id="169963"/>
    <lineage>
        <taxon>Bacteria</taxon>
        <taxon>Bacillati</taxon>
        <taxon>Bacillota</taxon>
        <taxon>Bacilli</taxon>
        <taxon>Bacillales</taxon>
        <taxon>Listeriaceae</taxon>
        <taxon>Listeria</taxon>
    </lineage>
</organism>
<accession>Q48793</accession>
<dbReference type="EC" id="2.7.6.1" evidence="1"/>
<dbReference type="EMBL" id="M92842">
    <property type="protein sequence ID" value="AAA62181.1"/>
    <property type="molecule type" value="Genomic_DNA"/>
</dbReference>
<dbReference type="EMBL" id="AL591974">
    <property type="protein sequence ID" value="CAD00726.1"/>
    <property type="molecule type" value="Genomic_DNA"/>
</dbReference>
<dbReference type="PIR" id="AH1099">
    <property type="entry name" value="AH1099"/>
</dbReference>
<dbReference type="RefSeq" id="WP_003722728.1">
    <property type="nucleotide sequence ID" value="NZ_CP149495.1"/>
</dbReference>
<dbReference type="SMR" id="Q48793"/>
<dbReference type="STRING" id="169963.gene:17592835"/>
<dbReference type="PaxDb" id="169963-lmo0199"/>
<dbReference type="EnsemblBacteria" id="CAD00726">
    <property type="protein sequence ID" value="CAD00726"/>
    <property type="gene ID" value="CAD00726"/>
</dbReference>
<dbReference type="KEGG" id="lmo:lmo0199"/>
<dbReference type="PATRIC" id="fig|169963.11.peg.204"/>
<dbReference type="eggNOG" id="COG0462">
    <property type="taxonomic scope" value="Bacteria"/>
</dbReference>
<dbReference type="HOGENOM" id="CLU_033546_4_0_9"/>
<dbReference type="OrthoDB" id="9777067at2"/>
<dbReference type="PhylomeDB" id="Q48793"/>
<dbReference type="BioCyc" id="LMON169963:LMO0199-MONOMER"/>
<dbReference type="UniPathway" id="UPA00087">
    <property type="reaction ID" value="UER00172"/>
</dbReference>
<dbReference type="Proteomes" id="UP000000817">
    <property type="component" value="Chromosome"/>
</dbReference>
<dbReference type="GO" id="GO:0005737">
    <property type="term" value="C:cytoplasm"/>
    <property type="evidence" value="ECO:0000318"/>
    <property type="project" value="GO_Central"/>
</dbReference>
<dbReference type="GO" id="GO:0002189">
    <property type="term" value="C:ribose phosphate diphosphokinase complex"/>
    <property type="evidence" value="ECO:0000318"/>
    <property type="project" value="GO_Central"/>
</dbReference>
<dbReference type="GO" id="GO:0005524">
    <property type="term" value="F:ATP binding"/>
    <property type="evidence" value="ECO:0007669"/>
    <property type="project" value="UniProtKB-KW"/>
</dbReference>
<dbReference type="GO" id="GO:0016301">
    <property type="term" value="F:kinase activity"/>
    <property type="evidence" value="ECO:0007669"/>
    <property type="project" value="UniProtKB-KW"/>
</dbReference>
<dbReference type="GO" id="GO:0000287">
    <property type="term" value="F:magnesium ion binding"/>
    <property type="evidence" value="ECO:0007669"/>
    <property type="project" value="UniProtKB-UniRule"/>
</dbReference>
<dbReference type="GO" id="GO:0004749">
    <property type="term" value="F:ribose phosphate diphosphokinase activity"/>
    <property type="evidence" value="ECO:0000318"/>
    <property type="project" value="GO_Central"/>
</dbReference>
<dbReference type="GO" id="GO:0006015">
    <property type="term" value="P:5-phosphoribose 1-diphosphate biosynthetic process"/>
    <property type="evidence" value="ECO:0000318"/>
    <property type="project" value="GO_Central"/>
</dbReference>
<dbReference type="GO" id="GO:0006164">
    <property type="term" value="P:purine nucleotide biosynthetic process"/>
    <property type="evidence" value="ECO:0000318"/>
    <property type="project" value="GO_Central"/>
</dbReference>
<dbReference type="GO" id="GO:0009156">
    <property type="term" value="P:ribonucleoside monophosphate biosynthetic process"/>
    <property type="evidence" value="ECO:0007669"/>
    <property type="project" value="InterPro"/>
</dbReference>
<dbReference type="CDD" id="cd06223">
    <property type="entry name" value="PRTases_typeI"/>
    <property type="match status" value="1"/>
</dbReference>
<dbReference type="FunFam" id="3.40.50.2020:FF:000007">
    <property type="entry name" value="Ribose-phosphate pyrophosphokinase"/>
    <property type="match status" value="1"/>
</dbReference>
<dbReference type="FunFam" id="3.40.50.2020:FF:000005">
    <property type="entry name" value="Ribose-phosphate pyrophosphokinase 1"/>
    <property type="match status" value="1"/>
</dbReference>
<dbReference type="Gene3D" id="3.40.50.2020">
    <property type="match status" value="2"/>
</dbReference>
<dbReference type="HAMAP" id="MF_00583_B">
    <property type="entry name" value="RibP_PPkinase_B"/>
    <property type="match status" value="1"/>
</dbReference>
<dbReference type="InterPro" id="IPR000842">
    <property type="entry name" value="PRib_PP_synth_CS"/>
</dbReference>
<dbReference type="InterPro" id="IPR029099">
    <property type="entry name" value="Pribosyltran_N"/>
</dbReference>
<dbReference type="InterPro" id="IPR000836">
    <property type="entry name" value="PRibTrfase_dom"/>
</dbReference>
<dbReference type="InterPro" id="IPR029057">
    <property type="entry name" value="PRTase-like"/>
</dbReference>
<dbReference type="InterPro" id="IPR005946">
    <property type="entry name" value="Rib-P_diPkinase"/>
</dbReference>
<dbReference type="InterPro" id="IPR037515">
    <property type="entry name" value="Rib-P_diPkinase_bac"/>
</dbReference>
<dbReference type="NCBIfam" id="NF002320">
    <property type="entry name" value="PRK01259.1"/>
    <property type="match status" value="1"/>
</dbReference>
<dbReference type="NCBIfam" id="NF002618">
    <property type="entry name" value="PRK02269.1"/>
    <property type="match status" value="1"/>
</dbReference>
<dbReference type="NCBIfam" id="TIGR01251">
    <property type="entry name" value="ribP_PPkin"/>
    <property type="match status" value="1"/>
</dbReference>
<dbReference type="PANTHER" id="PTHR10210">
    <property type="entry name" value="RIBOSE-PHOSPHATE DIPHOSPHOKINASE FAMILY MEMBER"/>
    <property type="match status" value="1"/>
</dbReference>
<dbReference type="PANTHER" id="PTHR10210:SF41">
    <property type="entry name" value="RIBOSE-PHOSPHATE PYROPHOSPHOKINASE 1, CHLOROPLASTIC"/>
    <property type="match status" value="1"/>
</dbReference>
<dbReference type="Pfam" id="PF14572">
    <property type="entry name" value="Pribosyl_synth"/>
    <property type="match status" value="1"/>
</dbReference>
<dbReference type="Pfam" id="PF13793">
    <property type="entry name" value="Pribosyltran_N"/>
    <property type="match status" value="1"/>
</dbReference>
<dbReference type="SMART" id="SM01400">
    <property type="entry name" value="Pribosyltran_N"/>
    <property type="match status" value="1"/>
</dbReference>
<dbReference type="SUPFAM" id="SSF53271">
    <property type="entry name" value="PRTase-like"/>
    <property type="match status" value="1"/>
</dbReference>
<dbReference type="PROSITE" id="PS00114">
    <property type="entry name" value="PRPP_SYNTHASE"/>
    <property type="match status" value="1"/>
</dbReference>
<feature type="chain" id="PRO_0000141157" description="Ribose-phosphate pyrophosphokinase 1">
    <location>
        <begin position="1"/>
        <end position="318"/>
    </location>
</feature>
<feature type="active site" evidence="1">
    <location>
        <position position="199"/>
    </location>
</feature>
<feature type="binding site" evidence="1">
    <location>
        <begin position="43"/>
        <end position="45"/>
    </location>
    <ligand>
        <name>ATP</name>
        <dbReference type="ChEBI" id="CHEBI:30616"/>
    </ligand>
</feature>
<feature type="binding site" evidence="1">
    <location>
        <begin position="102"/>
        <end position="103"/>
    </location>
    <ligand>
        <name>ATP</name>
        <dbReference type="ChEBI" id="CHEBI:30616"/>
    </ligand>
</feature>
<feature type="binding site" evidence="1">
    <location>
        <position position="136"/>
    </location>
    <ligand>
        <name>Mg(2+)</name>
        <dbReference type="ChEBI" id="CHEBI:18420"/>
        <label>1</label>
    </ligand>
</feature>
<feature type="binding site" evidence="1">
    <location>
        <position position="176"/>
    </location>
    <ligand>
        <name>Mg(2+)</name>
        <dbReference type="ChEBI" id="CHEBI:18420"/>
        <label>2</label>
    </ligand>
</feature>
<feature type="binding site" evidence="1">
    <location>
        <position position="201"/>
    </location>
    <ligand>
        <name>D-ribose 5-phosphate</name>
        <dbReference type="ChEBI" id="CHEBI:78346"/>
    </ligand>
</feature>
<feature type="binding site" evidence="1">
    <location>
        <position position="225"/>
    </location>
    <ligand>
        <name>D-ribose 5-phosphate</name>
        <dbReference type="ChEBI" id="CHEBI:78346"/>
    </ligand>
</feature>
<feature type="binding site" evidence="1">
    <location>
        <begin position="229"/>
        <end position="233"/>
    </location>
    <ligand>
        <name>D-ribose 5-phosphate</name>
        <dbReference type="ChEBI" id="CHEBI:78346"/>
    </ligand>
</feature>